<gene>
    <name type="primary">tuf</name>
</gene>
<feature type="chain" id="PRO_0000091397" description="Elongation factor Tu">
    <location>
        <begin position="1" status="less than"/>
        <end position="270" status="greater than"/>
    </location>
</feature>
<feature type="domain" description="tr-type G" evidence="3">
    <location>
        <begin position="1" status="less than"/>
        <end position="103"/>
    </location>
</feature>
<feature type="binding site" evidence="1">
    <location>
        <begin position="35"/>
        <end position="38"/>
    </location>
    <ligand>
        <name>GTP</name>
        <dbReference type="ChEBI" id="CHEBI:37565"/>
    </ligand>
</feature>
<feature type="non-terminal residue">
    <location>
        <position position="1"/>
    </location>
</feature>
<feature type="non-terminal residue">
    <location>
        <position position="270"/>
    </location>
</feature>
<protein>
    <recommendedName>
        <fullName>Elongation factor Tu</fullName>
        <shortName>EF-Tu</shortName>
        <ecNumber evidence="2">3.6.5.3</ecNumber>
    </recommendedName>
</protein>
<keyword id="KW-0963">Cytoplasm</keyword>
<keyword id="KW-0251">Elongation factor</keyword>
<keyword id="KW-0342">GTP-binding</keyword>
<keyword id="KW-0378">Hydrolase</keyword>
<keyword id="KW-0547">Nucleotide-binding</keyword>
<keyword id="KW-0648">Protein biosynthesis</keyword>
<name>EFTU_STAWA</name>
<reference key="1">
    <citation type="journal article" date="2001" name="J. Clin. Microbiol.">
        <title>Development of a PCR assay for identification of Staphylococci at genus and species levels.</title>
        <authorList>
            <person name="Martineau F."/>
            <person name="Picard F.J."/>
            <person name="Ke D."/>
            <person name="Paradis S."/>
            <person name="Roy P.H."/>
            <person name="Ouellette M."/>
            <person name="Bergeron M.G."/>
        </authorList>
    </citation>
    <scope>NUCLEOTIDE SEQUENCE [GENOMIC DNA]</scope>
    <source>
        <strain>ATCC 27836 / DSM 20316 / LMG 13354 / NCTC 11044 / AW 25 / CCM 2730</strain>
    </source>
</reference>
<accession>Q93PU8</accession>
<dbReference type="EC" id="3.6.5.3" evidence="2"/>
<dbReference type="EMBL" id="AF298806">
    <property type="protein sequence ID" value="AAK70337.1"/>
    <property type="molecule type" value="Genomic_DNA"/>
</dbReference>
<dbReference type="SMR" id="Q93PU8"/>
<dbReference type="STRING" id="1194526.A284_10605"/>
<dbReference type="GO" id="GO:0005829">
    <property type="term" value="C:cytosol"/>
    <property type="evidence" value="ECO:0007669"/>
    <property type="project" value="TreeGrafter"/>
</dbReference>
<dbReference type="GO" id="GO:0005525">
    <property type="term" value="F:GTP binding"/>
    <property type="evidence" value="ECO:0007669"/>
    <property type="project" value="UniProtKB-KW"/>
</dbReference>
<dbReference type="GO" id="GO:0003924">
    <property type="term" value="F:GTPase activity"/>
    <property type="evidence" value="ECO:0007669"/>
    <property type="project" value="InterPro"/>
</dbReference>
<dbReference type="GO" id="GO:0003746">
    <property type="term" value="F:translation elongation factor activity"/>
    <property type="evidence" value="ECO:0007669"/>
    <property type="project" value="UniProtKB-KW"/>
</dbReference>
<dbReference type="CDD" id="cd03697">
    <property type="entry name" value="EFTU_II"/>
    <property type="match status" value="1"/>
</dbReference>
<dbReference type="CDD" id="cd03707">
    <property type="entry name" value="EFTU_III"/>
    <property type="match status" value="1"/>
</dbReference>
<dbReference type="FunFam" id="2.40.30.10:FF:000001">
    <property type="entry name" value="Elongation factor Tu"/>
    <property type="match status" value="1"/>
</dbReference>
<dbReference type="Gene3D" id="3.40.50.300">
    <property type="entry name" value="P-loop containing nucleotide triphosphate hydrolases"/>
    <property type="match status" value="1"/>
</dbReference>
<dbReference type="Gene3D" id="2.40.30.10">
    <property type="entry name" value="Translation factors"/>
    <property type="match status" value="2"/>
</dbReference>
<dbReference type="InterPro" id="IPR050055">
    <property type="entry name" value="EF-Tu_GTPase"/>
</dbReference>
<dbReference type="InterPro" id="IPR004161">
    <property type="entry name" value="EFTu-like_2"/>
</dbReference>
<dbReference type="InterPro" id="IPR033720">
    <property type="entry name" value="EFTU_2"/>
</dbReference>
<dbReference type="InterPro" id="IPR027417">
    <property type="entry name" value="P-loop_NTPase"/>
</dbReference>
<dbReference type="InterPro" id="IPR000795">
    <property type="entry name" value="T_Tr_GTP-bd_dom"/>
</dbReference>
<dbReference type="InterPro" id="IPR009000">
    <property type="entry name" value="Transl_B-barrel_sf"/>
</dbReference>
<dbReference type="InterPro" id="IPR009001">
    <property type="entry name" value="Transl_elong_EF1A/Init_IF2_C"/>
</dbReference>
<dbReference type="InterPro" id="IPR004160">
    <property type="entry name" value="Transl_elong_EFTu/EF1A_C"/>
</dbReference>
<dbReference type="NCBIfam" id="NF000766">
    <property type="entry name" value="PRK00049.1"/>
    <property type="match status" value="1"/>
</dbReference>
<dbReference type="NCBIfam" id="NF009372">
    <property type="entry name" value="PRK12735.1"/>
    <property type="match status" value="1"/>
</dbReference>
<dbReference type="NCBIfam" id="NF009373">
    <property type="entry name" value="PRK12736.1"/>
    <property type="match status" value="1"/>
</dbReference>
<dbReference type="PANTHER" id="PTHR43721:SF22">
    <property type="entry name" value="ELONGATION FACTOR TU, MITOCHONDRIAL"/>
    <property type="match status" value="1"/>
</dbReference>
<dbReference type="PANTHER" id="PTHR43721">
    <property type="entry name" value="ELONGATION FACTOR TU-RELATED"/>
    <property type="match status" value="1"/>
</dbReference>
<dbReference type="Pfam" id="PF00009">
    <property type="entry name" value="GTP_EFTU"/>
    <property type="match status" value="1"/>
</dbReference>
<dbReference type="Pfam" id="PF03144">
    <property type="entry name" value="GTP_EFTU_D2"/>
    <property type="match status" value="1"/>
</dbReference>
<dbReference type="Pfam" id="PF03143">
    <property type="entry name" value="GTP_EFTU_D3"/>
    <property type="match status" value="1"/>
</dbReference>
<dbReference type="SUPFAM" id="SSF50465">
    <property type="entry name" value="EF-Tu/eEF-1alpha/eIF2-gamma C-terminal domain"/>
    <property type="match status" value="1"/>
</dbReference>
<dbReference type="SUPFAM" id="SSF52540">
    <property type="entry name" value="P-loop containing nucleoside triphosphate hydrolases"/>
    <property type="match status" value="1"/>
</dbReference>
<dbReference type="SUPFAM" id="SSF50447">
    <property type="entry name" value="Translation proteins"/>
    <property type="match status" value="1"/>
</dbReference>
<dbReference type="PROSITE" id="PS51722">
    <property type="entry name" value="G_TR_2"/>
    <property type="match status" value="1"/>
</dbReference>
<organism>
    <name type="scientific">Staphylococcus warneri</name>
    <dbReference type="NCBI Taxonomy" id="1292"/>
    <lineage>
        <taxon>Bacteria</taxon>
        <taxon>Bacillati</taxon>
        <taxon>Bacillota</taxon>
        <taxon>Bacilli</taxon>
        <taxon>Bacillales</taxon>
        <taxon>Staphylococcaceae</taxon>
        <taxon>Staphylococcus</taxon>
    </lineage>
</organism>
<proteinExistence type="inferred from homology"/>
<sequence length="270" mass="29727">GILVVSAADGPMPQTREHILLSRNVGVPALVVFLNKVDMVDDEELLELVEMEVRDLLSEYDFPGDDVPVIAGSALKALEGDEKYEEKILELMQAVDDYIPTPERDSDKPFMMPVEDVFSITGRGTVATGRVERGQIKVGEEVEIIGLHDTSKTTVTGVEMFRKLLDYAEAGDNIGALLRGVAREDVQRGQVLAAPGSITPHTKFKAEVYVLSKDEGGRHTPFFSNYRPQFYFRTTDVTGVVQLPEGTEMVMPGDNVEMTVELIAPIAIED</sequence>
<evidence type="ECO:0000250" key="1"/>
<evidence type="ECO:0000255" key="2">
    <source>
        <dbReference type="HAMAP-Rule" id="MF_00118"/>
    </source>
</evidence>
<evidence type="ECO:0000255" key="3">
    <source>
        <dbReference type="PROSITE-ProRule" id="PRU01059"/>
    </source>
</evidence>
<comment type="function">
    <text evidence="2">GTP hydrolase that promotes the GTP-dependent binding of aminoacyl-tRNA to the A-site of ribosomes during protein biosynthesis.</text>
</comment>
<comment type="catalytic activity">
    <reaction evidence="2">
        <text>GTP + H2O = GDP + phosphate + H(+)</text>
        <dbReference type="Rhea" id="RHEA:19669"/>
        <dbReference type="ChEBI" id="CHEBI:15377"/>
        <dbReference type="ChEBI" id="CHEBI:15378"/>
        <dbReference type="ChEBI" id="CHEBI:37565"/>
        <dbReference type="ChEBI" id="CHEBI:43474"/>
        <dbReference type="ChEBI" id="CHEBI:58189"/>
        <dbReference type="EC" id="3.6.5.3"/>
    </reaction>
    <physiologicalReaction direction="left-to-right" evidence="2">
        <dbReference type="Rhea" id="RHEA:19670"/>
    </physiologicalReaction>
</comment>
<comment type="subunit">
    <text evidence="1">Monomer.</text>
</comment>
<comment type="subcellular location">
    <subcellularLocation>
        <location>Cytoplasm</location>
    </subcellularLocation>
</comment>
<comment type="similarity">
    <text evidence="3">Belongs to the TRAFAC class translation factor GTPase superfamily. Classic translation factor GTPase family. EF-Tu/EF-1A subfamily.</text>
</comment>